<proteinExistence type="inferred from homology"/>
<comment type="function">
    <text evidence="2">Cell wall formation.</text>
</comment>
<comment type="catalytic activity">
    <reaction evidence="2">
        <text>2 D-alanine + ATP = D-alanyl-D-alanine + ADP + phosphate + H(+)</text>
        <dbReference type="Rhea" id="RHEA:11224"/>
        <dbReference type="ChEBI" id="CHEBI:15378"/>
        <dbReference type="ChEBI" id="CHEBI:30616"/>
        <dbReference type="ChEBI" id="CHEBI:43474"/>
        <dbReference type="ChEBI" id="CHEBI:57416"/>
        <dbReference type="ChEBI" id="CHEBI:57822"/>
        <dbReference type="ChEBI" id="CHEBI:456216"/>
        <dbReference type="EC" id="6.3.2.4"/>
    </reaction>
</comment>
<comment type="cofactor">
    <cofactor evidence="1">
        <name>Mg(2+)</name>
        <dbReference type="ChEBI" id="CHEBI:18420"/>
    </cofactor>
    <cofactor evidence="1">
        <name>Mn(2+)</name>
        <dbReference type="ChEBI" id="CHEBI:29035"/>
    </cofactor>
    <text evidence="1">Binds 2 magnesium or manganese ions per subunit.</text>
</comment>
<comment type="pathway">
    <text evidence="2">Cell wall biogenesis; peptidoglycan biosynthesis.</text>
</comment>
<comment type="subcellular location">
    <subcellularLocation>
        <location evidence="2">Cytoplasm</location>
    </subcellularLocation>
</comment>
<comment type="similarity">
    <text evidence="2">Belongs to the D-alanine--D-alanine ligase family.</text>
</comment>
<gene>
    <name evidence="2" type="primary">ddl</name>
    <name type="ordered locus">CLM_0535</name>
</gene>
<reference key="1">
    <citation type="submission" date="2008-10" db="EMBL/GenBank/DDBJ databases">
        <title>Genome sequence of Clostridium botulinum A2 Kyoto.</title>
        <authorList>
            <person name="Shrivastava S."/>
            <person name="Brinkac L.M."/>
            <person name="Brown J.L."/>
            <person name="Bruce D."/>
            <person name="Detter C.C."/>
            <person name="Johnson E.A."/>
            <person name="Munk C.A."/>
            <person name="Smith L.A."/>
            <person name="Smith T.J."/>
            <person name="Sutton G."/>
            <person name="Brettin T.S."/>
        </authorList>
    </citation>
    <scope>NUCLEOTIDE SEQUENCE [LARGE SCALE GENOMIC DNA]</scope>
    <source>
        <strain>Kyoto / Type A2</strain>
    </source>
</reference>
<protein>
    <recommendedName>
        <fullName evidence="2">D-alanine--D-alanine ligase</fullName>
        <ecNumber evidence="2">6.3.2.4</ecNumber>
    </recommendedName>
    <alternativeName>
        <fullName evidence="2">D-Ala-D-Ala ligase</fullName>
    </alternativeName>
    <alternativeName>
        <fullName evidence="2">D-alanylalanine synthetase</fullName>
    </alternativeName>
</protein>
<name>DDL_CLOBJ</name>
<evidence type="ECO:0000250" key="1"/>
<evidence type="ECO:0000255" key="2">
    <source>
        <dbReference type="HAMAP-Rule" id="MF_00047"/>
    </source>
</evidence>
<dbReference type="EC" id="6.3.2.4" evidence="2"/>
<dbReference type="EMBL" id="CP001581">
    <property type="protein sequence ID" value="ACO86471.1"/>
    <property type="molecule type" value="Genomic_DNA"/>
</dbReference>
<dbReference type="RefSeq" id="WP_003356163.1">
    <property type="nucleotide sequence ID" value="NC_012563.1"/>
</dbReference>
<dbReference type="SMR" id="C1FSC4"/>
<dbReference type="KEGG" id="cby:CLM_0535"/>
<dbReference type="eggNOG" id="COG1181">
    <property type="taxonomic scope" value="Bacteria"/>
</dbReference>
<dbReference type="HOGENOM" id="CLU_039268_1_1_9"/>
<dbReference type="UniPathway" id="UPA00219"/>
<dbReference type="Proteomes" id="UP000001374">
    <property type="component" value="Chromosome"/>
</dbReference>
<dbReference type="GO" id="GO:0005737">
    <property type="term" value="C:cytoplasm"/>
    <property type="evidence" value="ECO:0007669"/>
    <property type="project" value="UniProtKB-SubCell"/>
</dbReference>
<dbReference type="GO" id="GO:0005524">
    <property type="term" value="F:ATP binding"/>
    <property type="evidence" value="ECO:0007669"/>
    <property type="project" value="UniProtKB-KW"/>
</dbReference>
<dbReference type="GO" id="GO:0008716">
    <property type="term" value="F:D-alanine-D-alanine ligase activity"/>
    <property type="evidence" value="ECO:0007669"/>
    <property type="project" value="UniProtKB-UniRule"/>
</dbReference>
<dbReference type="GO" id="GO:0046872">
    <property type="term" value="F:metal ion binding"/>
    <property type="evidence" value="ECO:0007669"/>
    <property type="project" value="UniProtKB-KW"/>
</dbReference>
<dbReference type="GO" id="GO:0071555">
    <property type="term" value="P:cell wall organization"/>
    <property type="evidence" value="ECO:0007669"/>
    <property type="project" value="UniProtKB-KW"/>
</dbReference>
<dbReference type="GO" id="GO:0009252">
    <property type="term" value="P:peptidoglycan biosynthetic process"/>
    <property type="evidence" value="ECO:0007669"/>
    <property type="project" value="UniProtKB-UniRule"/>
</dbReference>
<dbReference type="GO" id="GO:0008360">
    <property type="term" value="P:regulation of cell shape"/>
    <property type="evidence" value="ECO:0007669"/>
    <property type="project" value="UniProtKB-KW"/>
</dbReference>
<dbReference type="FunFam" id="3.30.1490.20:FF:000035">
    <property type="entry name" value="D-alanine--D-alanine ligase"/>
    <property type="match status" value="1"/>
</dbReference>
<dbReference type="FunFam" id="3.30.470.20:FF:000074">
    <property type="entry name" value="D-alanine--D-alanine ligase"/>
    <property type="match status" value="1"/>
</dbReference>
<dbReference type="FunFam" id="3.40.50.20:FF:000031">
    <property type="entry name" value="D-alanine--D-alanine ligase"/>
    <property type="match status" value="1"/>
</dbReference>
<dbReference type="Gene3D" id="3.40.50.20">
    <property type="match status" value="1"/>
</dbReference>
<dbReference type="Gene3D" id="3.30.1490.20">
    <property type="entry name" value="ATP-grasp fold, A domain"/>
    <property type="match status" value="1"/>
</dbReference>
<dbReference type="Gene3D" id="3.30.470.20">
    <property type="entry name" value="ATP-grasp fold, B domain"/>
    <property type="match status" value="1"/>
</dbReference>
<dbReference type="HAMAP" id="MF_00047">
    <property type="entry name" value="Dala_Dala_lig"/>
    <property type="match status" value="1"/>
</dbReference>
<dbReference type="InterPro" id="IPR011761">
    <property type="entry name" value="ATP-grasp"/>
</dbReference>
<dbReference type="InterPro" id="IPR013815">
    <property type="entry name" value="ATP_grasp_subdomain_1"/>
</dbReference>
<dbReference type="InterPro" id="IPR000291">
    <property type="entry name" value="D-Ala_lig_Van_CS"/>
</dbReference>
<dbReference type="InterPro" id="IPR005905">
    <property type="entry name" value="D_ala_D_ala"/>
</dbReference>
<dbReference type="InterPro" id="IPR011095">
    <property type="entry name" value="Dala_Dala_lig_C"/>
</dbReference>
<dbReference type="InterPro" id="IPR011127">
    <property type="entry name" value="Dala_Dala_lig_N"/>
</dbReference>
<dbReference type="InterPro" id="IPR016185">
    <property type="entry name" value="PreATP-grasp_dom_sf"/>
</dbReference>
<dbReference type="NCBIfam" id="TIGR01205">
    <property type="entry name" value="D_ala_D_alaTIGR"/>
    <property type="match status" value="1"/>
</dbReference>
<dbReference type="NCBIfam" id="NF002378">
    <property type="entry name" value="PRK01372.1"/>
    <property type="match status" value="1"/>
</dbReference>
<dbReference type="PANTHER" id="PTHR23132">
    <property type="entry name" value="D-ALANINE--D-ALANINE LIGASE"/>
    <property type="match status" value="1"/>
</dbReference>
<dbReference type="PANTHER" id="PTHR23132:SF23">
    <property type="entry name" value="D-ALANINE--D-ALANINE LIGASE B"/>
    <property type="match status" value="1"/>
</dbReference>
<dbReference type="Pfam" id="PF07478">
    <property type="entry name" value="Dala_Dala_lig_C"/>
    <property type="match status" value="1"/>
</dbReference>
<dbReference type="Pfam" id="PF01820">
    <property type="entry name" value="Dala_Dala_lig_N"/>
    <property type="match status" value="1"/>
</dbReference>
<dbReference type="PIRSF" id="PIRSF039102">
    <property type="entry name" value="Ddl/VanB"/>
    <property type="match status" value="1"/>
</dbReference>
<dbReference type="SMART" id="SM01209">
    <property type="entry name" value="GARS_A"/>
    <property type="match status" value="1"/>
</dbReference>
<dbReference type="SUPFAM" id="SSF56059">
    <property type="entry name" value="Glutathione synthetase ATP-binding domain-like"/>
    <property type="match status" value="1"/>
</dbReference>
<dbReference type="SUPFAM" id="SSF52440">
    <property type="entry name" value="PreATP-grasp domain"/>
    <property type="match status" value="1"/>
</dbReference>
<dbReference type="PROSITE" id="PS50975">
    <property type="entry name" value="ATP_GRASP"/>
    <property type="match status" value="1"/>
</dbReference>
<dbReference type="PROSITE" id="PS00843">
    <property type="entry name" value="DALA_DALA_LIGASE_1"/>
    <property type="match status" value="1"/>
</dbReference>
<dbReference type="PROSITE" id="PS00844">
    <property type="entry name" value="DALA_DALA_LIGASE_2"/>
    <property type="match status" value="1"/>
</dbReference>
<accession>C1FSC4</accession>
<keyword id="KW-0067">ATP-binding</keyword>
<keyword id="KW-0133">Cell shape</keyword>
<keyword id="KW-0961">Cell wall biogenesis/degradation</keyword>
<keyword id="KW-0963">Cytoplasm</keyword>
<keyword id="KW-0436">Ligase</keyword>
<keyword id="KW-0460">Magnesium</keyword>
<keyword id="KW-0464">Manganese</keyword>
<keyword id="KW-0479">Metal-binding</keyword>
<keyword id="KW-0547">Nucleotide-binding</keyword>
<keyword id="KW-0573">Peptidoglycan synthesis</keyword>
<sequence>MKIGVIMGGISTEREVSLNSGREVIKYLELLEHEIIPIIIDKKEDVMEKAKGIDFAFLALHGKFGEDGTVQSVLQTLDIPYSGCGPLTSAICMDKDMTKKILKYANINTADWVNVSSVENIDYEAIEKIGYPVFVKPNSGGSSVATNLVKDKEGIKEAVELALKYDKEVMIENYTKGEEITCCMLNGKMLPVLAIRPHAEFFDYTAKYADGGSDEVVIELEENLHKKVEEMALACWKELKCEVYVRVDMIVKDGIPYVLELNTLPGMTKNSLFPKSANAVGISFAELLNSIVKYSLEVER</sequence>
<organism>
    <name type="scientific">Clostridium botulinum (strain Kyoto / Type A2)</name>
    <dbReference type="NCBI Taxonomy" id="536232"/>
    <lineage>
        <taxon>Bacteria</taxon>
        <taxon>Bacillati</taxon>
        <taxon>Bacillota</taxon>
        <taxon>Clostridia</taxon>
        <taxon>Eubacteriales</taxon>
        <taxon>Clostridiaceae</taxon>
        <taxon>Clostridium</taxon>
    </lineage>
</organism>
<feature type="chain" id="PRO_1000189731" description="D-alanine--D-alanine ligase">
    <location>
        <begin position="1"/>
        <end position="300"/>
    </location>
</feature>
<feature type="domain" description="ATP-grasp" evidence="2">
    <location>
        <begin position="99"/>
        <end position="293"/>
    </location>
</feature>
<feature type="binding site" evidence="2">
    <location>
        <begin position="126"/>
        <end position="181"/>
    </location>
    <ligand>
        <name>ATP</name>
        <dbReference type="ChEBI" id="CHEBI:30616"/>
    </ligand>
</feature>
<feature type="binding site" evidence="2">
    <location>
        <position position="248"/>
    </location>
    <ligand>
        <name>Mg(2+)</name>
        <dbReference type="ChEBI" id="CHEBI:18420"/>
        <label>1</label>
    </ligand>
</feature>
<feature type="binding site" evidence="2">
    <location>
        <position position="260"/>
    </location>
    <ligand>
        <name>Mg(2+)</name>
        <dbReference type="ChEBI" id="CHEBI:18420"/>
        <label>1</label>
    </ligand>
</feature>
<feature type="binding site" evidence="2">
    <location>
        <position position="260"/>
    </location>
    <ligand>
        <name>Mg(2+)</name>
        <dbReference type="ChEBI" id="CHEBI:18420"/>
        <label>2</label>
    </ligand>
</feature>
<feature type="binding site" evidence="2">
    <location>
        <position position="262"/>
    </location>
    <ligand>
        <name>Mg(2+)</name>
        <dbReference type="ChEBI" id="CHEBI:18420"/>
        <label>2</label>
    </ligand>
</feature>